<accession>A1E9V7</accession>
<protein>
    <recommendedName>
        <fullName evidence="1">Small ribosomal subunit protein uS11c</fullName>
    </recommendedName>
    <alternativeName>
        <fullName evidence="2">30S ribosomal protein S11, chloroplastic</fullName>
    </alternativeName>
</protein>
<geneLocation type="chloroplast"/>
<proteinExistence type="inferred from homology"/>
<dbReference type="EMBL" id="EF115542">
    <property type="protein sequence ID" value="ABK79528.1"/>
    <property type="molecule type" value="Genomic_DNA"/>
</dbReference>
<dbReference type="RefSeq" id="YP_899440.1">
    <property type="nucleotide sequence ID" value="NC_008602.1"/>
</dbReference>
<dbReference type="SMR" id="A1E9V7"/>
<dbReference type="FunCoup" id="A1E9V7">
    <property type="interactions" value="449"/>
</dbReference>
<dbReference type="STRING" id="4558.A1E9V7"/>
<dbReference type="GeneID" id="4549224"/>
<dbReference type="KEGG" id="sbi:4549224"/>
<dbReference type="InParanoid" id="A1E9V7"/>
<dbReference type="OrthoDB" id="535480at2759"/>
<dbReference type="Proteomes" id="UP000000768">
    <property type="component" value="Chloroplast"/>
</dbReference>
<dbReference type="ExpressionAtlas" id="A1E9V7">
    <property type="expression patterns" value="baseline"/>
</dbReference>
<dbReference type="GO" id="GO:0009507">
    <property type="term" value="C:chloroplast"/>
    <property type="evidence" value="ECO:0007669"/>
    <property type="project" value="UniProtKB-SubCell"/>
</dbReference>
<dbReference type="GO" id="GO:1990904">
    <property type="term" value="C:ribonucleoprotein complex"/>
    <property type="evidence" value="ECO:0007669"/>
    <property type="project" value="UniProtKB-KW"/>
</dbReference>
<dbReference type="GO" id="GO:0005840">
    <property type="term" value="C:ribosome"/>
    <property type="evidence" value="ECO:0007669"/>
    <property type="project" value="UniProtKB-KW"/>
</dbReference>
<dbReference type="GO" id="GO:0019843">
    <property type="term" value="F:rRNA binding"/>
    <property type="evidence" value="ECO:0007669"/>
    <property type="project" value="UniProtKB-UniRule"/>
</dbReference>
<dbReference type="GO" id="GO:0003735">
    <property type="term" value="F:structural constituent of ribosome"/>
    <property type="evidence" value="ECO:0000318"/>
    <property type="project" value="GO_Central"/>
</dbReference>
<dbReference type="GO" id="GO:0006412">
    <property type="term" value="P:translation"/>
    <property type="evidence" value="ECO:0000318"/>
    <property type="project" value="GO_Central"/>
</dbReference>
<dbReference type="FunFam" id="3.30.420.80:FF:000003">
    <property type="entry name" value="30S ribosomal protein S11, chloroplastic"/>
    <property type="match status" value="1"/>
</dbReference>
<dbReference type="Gene3D" id="3.30.420.80">
    <property type="entry name" value="Ribosomal protein S11"/>
    <property type="match status" value="1"/>
</dbReference>
<dbReference type="HAMAP" id="MF_01310">
    <property type="entry name" value="Ribosomal_uS11"/>
    <property type="match status" value="1"/>
</dbReference>
<dbReference type="InterPro" id="IPR001971">
    <property type="entry name" value="Ribosomal_uS11"/>
</dbReference>
<dbReference type="InterPro" id="IPR018102">
    <property type="entry name" value="Ribosomal_uS11_CS"/>
</dbReference>
<dbReference type="InterPro" id="IPR036967">
    <property type="entry name" value="Ribosomal_uS11_sf"/>
</dbReference>
<dbReference type="NCBIfam" id="NF003698">
    <property type="entry name" value="PRK05309.1"/>
    <property type="match status" value="1"/>
</dbReference>
<dbReference type="PANTHER" id="PTHR11759">
    <property type="entry name" value="40S RIBOSOMAL PROTEIN S14/30S RIBOSOMAL PROTEIN S11"/>
    <property type="match status" value="1"/>
</dbReference>
<dbReference type="Pfam" id="PF00411">
    <property type="entry name" value="Ribosomal_S11"/>
    <property type="match status" value="1"/>
</dbReference>
<dbReference type="PIRSF" id="PIRSF002131">
    <property type="entry name" value="Ribosomal_S11"/>
    <property type="match status" value="1"/>
</dbReference>
<dbReference type="SUPFAM" id="SSF53137">
    <property type="entry name" value="Translational machinery components"/>
    <property type="match status" value="1"/>
</dbReference>
<dbReference type="PROSITE" id="PS00054">
    <property type="entry name" value="RIBOSOMAL_S11"/>
    <property type="match status" value="1"/>
</dbReference>
<reference key="1">
    <citation type="journal article" date="2007" name="Theor. Appl. Genet.">
        <title>Complete chloroplast genome sequences of Hordeum vulgare, Sorghum bicolor and Agrostis stolonifera, and comparative analyses with other grass genomes.</title>
        <authorList>
            <person name="Saski C."/>
            <person name="Lee S.-B."/>
            <person name="Fjellheim S."/>
            <person name="Guda C."/>
            <person name="Jansen R.K."/>
            <person name="Luo H."/>
            <person name="Tomkins J."/>
            <person name="Rognli O.A."/>
            <person name="Daniell H."/>
            <person name="Clarke J.L."/>
        </authorList>
    </citation>
    <scope>NUCLEOTIDE SEQUENCE [LARGE SCALE GENOMIC DNA]</scope>
    <source>
        <strain>cv. BTx623</strain>
    </source>
</reference>
<organism>
    <name type="scientific">Sorghum bicolor</name>
    <name type="common">Sorghum</name>
    <name type="synonym">Sorghum vulgare</name>
    <dbReference type="NCBI Taxonomy" id="4558"/>
    <lineage>
        <taxon>Eukaryota</taxon>
        <taxon>Viridiplantae</taxon>
        <taxon>Streptophyta</taxon>
        <taxon>Embryophyta</taxon>
        <taxon>Tracheophyta</taxon>
        <taxon>Spermatophyta</taxon>
        <taxon>Magnoliopsida</taxon>
        <taxon>Liliopsida</taxon>
        <taxon>Poales</taxon>
        <taxon>Poaceae</taxon>
        <taxon>PACMAD clade</taxon>
        <taxon>Panicoideae</taxon>
        <taxon>Andropogonodae</taxon>
        <taxon>Andropogoneae</taxon>
        <taxon>Sorghinae</taxon>
        <taxon>Sorghum</taxon>
    </lineage>
</organism>
<comment type="subunit">
    <text evidence="1">Part of the 30S ribosomal subunit.</text>
</comment>
<comment type="subcellular location">
    <subcellularLocation>
        <location>Plastid</location>
        <location>Chloroplast</location>
    </subcellularLocation>
</comment>
<comment type="similarity">
    <text evidence="1">Belongs to the universal ribosomal protein uS11 family.</text>
</comment>
<name>RR11_SORBI</name>
<sequence>MTKAIPKIGSRKKVRIGLRRNARFSLRKSARRITKGVIHVQASFNNTIITVTDPQGRVVFWSSAGTCGFKSSRKASPYAGQRTAVDAIRTVGLQRAEVMVKGAGSGRDAALRAIAKSGVRLSCIRDVTPMPHNGCRPPKKRRL</sequence>
<gene>
    <name evidence="1" type="primary">rps11</name>
</gene>
<keyword id="KW-0150">Chloroplast</keyword>
<keyword id="KW-0934">Plastid</keyword>
<keyword id="KW-1185">Reference proteome</keyword>
<keyword id="KW-0687">Ribonucleoprotein</keyword>
<keyword id="KW-0689">Ribosomal protein</keyword>
<keyword id="KW-0694">RNA-binding</keyword>
<keyword id="KW-0699">rRNA-binding</keyword>
<evidence type="ECO:0000255" key="1">
    <source>
        <dbReference type="HAMAP-Rule" id="MF_01310"/>
    </source>
</evidence>
<evidence type="ECO:0000305" key="2"/>
<feature type="chain" id="PRO_0000276658" description="Small ribosomal subunit protein uS11c">
    <location>
        <begin position="1"/>
        <end position="143"/>
    </location>
</feature>